<accession>Q9R1J8</accession>
<protein>
    <recommendedName>
        <fullName evidence="9">Prolyl 3-hydroxylase 1</fullName>
        <ecNumber>1.14.11.7</ecNumber>
    </recommendedName>
    <alternativeName>
        <fullName evidence="7">Leucine- and proline-enriched proteoglycan 1</fullName>
        <shortName evidence="7">Leprecan-1</shortName>
    </alternativeName>
</protein>
<comment type="function">
    <text evidence="1">Basement membrane-associated chondroitin sulfate proteoglycan (CSPG). Has prolyl 3-hydroxylase activity catalyzing the post-translational formation of 3-hydroxyproline in -Xaa-Pro-Gly- sequences in collagens, especially types IV and V. May be involved in the secretory pathway of cells. Has growth suppressive activity in fibroblasts (By similarity).</text>
</comment>
<comment type="catalytic activity">
    <reaction>
        <text>L-prolyl-[collagen] + 2-oxoglutarate + O2 = trans-3-hydroxy-L-prolyl-[collagen] + succinate + CO2</text>
        <dbReference type="Rhea" id="RHEA:22872"/>
        <dbReference type="Rhea" id="RHEA-COMP:11676"/>
        <dbReference type="Rhea" id="RHEA-COMP:11678"/>
        <dbReference type="ChEBI" id="CHEBI:15379"/>
        <dbReference type="ChEBI" id="CHEBI:16526"/>
        <dbReference type="ChEBI" id="CHEBI:16810"/>
        <dbReference type="ChEBI" id="CHEBI:30031"/>
        <dbReference type="ChEBI" id="CHEBI:50342"/>
        <dbReference type="ChEBI" id="CHEBI:85428"/>
        <dbReference type="EC" id="1.14.11.7"/>
    </reaction>
</comment>
<comment type="cofactor">
    <cofactor evidence="1">
        <name>Fe cation</name>
        <dbReference type="ChEBI" id="CHEBI:24875"/>
    </cofactor>
</comment>
<comment type="cofactor">
    <cofactor evidence="1">
        <name>L-ascorbate</name>
        <dbReference type="ChEBI" id="CHEBI:38290"/>
    </cofactor>
</comment>
<comment type="subcellular location">
    <subcellularLocation>
        <location evidence="4 6">Endoplasmic reticulum</location>
    </subcellularLocation>
    <subcellularLocation>
        <location evidence="6">Secreted</location>
        <location evidence="6">Extracellular space</location>
        <location evidence="6">Extracellular matrix</location>
    </subcellularLocation>
    <text evidence="6">Secreted into the extracellular matrix as a chondroitin sulfate proteoglycan (CSPG).</text>
</comment>
<comment type="tissue specificity">
    <text evidence="6">Expressed in basement membranes of cardiac muscle, skeletal muscle, central nervous system, intestinal tract, trachea, ear, skin, liver and kidney. In kidney, localizes to the glomerular basement membrane, mesangial matrix and Bowman's capsule of the nephron. In the renal parenchyma, expressed in the basement membranes of tubules and blood vessels. In the ear and trachea, localizes to the perimeter of resident chondrocytes in lacunae.</text>
</comment>
<comment type="PTM">
    <text evidence="6">O-glycosylated; chondroitin sulfate.</text>
</comment>
<comment type="similarity">
    <text evidence="8">Belongs to the leprecan family.</text>
</comment>
<sequence>MVAVAAAAASRATAESEPEWNVAAPDLLYAEGTAAYARGDWPGVVLNMERALRSRAALRALRLRCRTRCATELPWAPDLDLGPASSLNHDPGAAALHDLRFFGALLRRAACLRRCLGPPSAHLLSEELDLEFNKRSPYNYLQVAYFKINKLEKAVAAAHTFFVGNPEHMEMRQNLDYYQTMSGVKEEDFKDLEAKPHMHEFRLGVRLYSEEKPLEAVPHLEAALQEYFVADEECRALCEGPYDYDGYNYLDYSADLFQAITDHYVQVLSCKQNCVTELASHPSREKPFEDFLPSHYNYLQFAYYNIGNYTQAIECAKTYLLFFPNDEVMSQNLAYYTAVLGEEEASSISPRENAQEYRHRSLLEKELLFFAYDIFGIPFVDPDSWTPEEVIPKRLQEKQKSERETAVRISQEIGNLMKEIETLVEEKTKESLDVSRLTREGGPLLYEGINLTMNSKVLNGSQRVVMDGVISDDECQELQRLTNAAATSGDGYRGQTSPHTPNEKFYGVTVLKALKLGQEGKVPLQSAHMYYNVTEKVRRVMESYFRLDTPLYFSYSHLVCRTAIEESQAERKDSSHPVHVDNCILNAESLVCIKEPPAYTFRDYSAILYLNGDFDGGNFYFTELDAKTVTAEVQPQCGRAVGFSSGTENPHGVKAVTRGQRCAIALWFTLDPRHSERDRVQADDLVKMLFSPEEVDLPQEQPLPDQQGSPKPGEESLSDRESQPKDEL</sequence>
<reference key="1">
    <citation type="journal article" date="1999" name="J. Biol. Chem.">
        <title>Molecular characterization of a novel basement membrane-associated proteoglycan, leprecan.</title>
        <authorList>
            <person name="Wassenhove-McCarthy D.J."/>
            <person name="McCarthy K.J."/>
        </authorList>
    </citation>
    <scope>NUCLEOTIDE SEQUENCE [MRNA]</scope>
    <scope>GLYCOSYLATION</scope>
    <scope>SUBCELLULAR LOCATION</scope>
    <scope>TISSUE SPECIFICITY</scope>
    <source>
        <tissue>Fibroblast</tissue>
    </source>
</reference>
<dbReference type="EC" id="1.14.11.7"/>
<dbReference type="EMBL" id="AF087433">
    <property type="protein sequence ID" value="AAD51875.1"/>
    <property type="molecule type" value="mRNA"/>
</dbReference>
<dbReference type="RefSeq" id="NP_446119.1">
    <property type="nucleotide sequence ID" value="NM_053667.1"/>
</dbReference>
<dbReference type="SMR" id="Q9R1J8"/>
<dbReference type="FunCoup" id="Q9R1J8">
    <property type="interactions" value="754"/>
</dbReference>
<dbReference type="IntAct" id="Q9R1J8">
    <property type="interactions" value="1"/>
</dbReference>
<dbReference type="STRING" id="10116.ENSRNOP00000071755"/>
<dbReference type="GlyCosmos" id="Q9R1J8">
    <property type="glycosylation" value="4 sites, No reported glycans"/>
</dbReference>
<dbReference type="GlyGen" id="Q9R1J8">
    <property type="glycosylation" value="5 sites"/>
</dbReference>
<dbReference type="PhosphoSitePlus" id="Q9R1J8"/>
<dbReference type="PaxDb" id="10116-ENSRNOP00000010395"/>
<dbReference type="GeneID" id="114200"/>
<dbReference type="KEGG" id="rno:114200"/>
<dbReference type="UCSC" id="RGD:628823">
    <property type="organism name" value="rat"/>
</dbReference>
<dbReference type="AGR" id="RGD:628823"/>
<dbReference type="CTD" id="64175"/>
<dbReference type="RGD" id="628823">
    <property type="gene designation" value="P3h1"/>
</dbReference>
<dbReference type="eggNOG" id="KOG4459">
    <property type="taxonomic scope" value="Eukaryota"/>
</dbReference>
<dbReference type="InParanoid" id="Q9R1J8"/>
<dbReference type="PhylomeDB" id="Q9R1J8"/>
<dbReference type="PRO" id="PR:Q9R1J8"/>
<dbReference type="Proteomes" id="UP000002494">
    <property type="component" value="Unplaced"/>
</dbReference>
<dbReference type="GO" id="GO:0005604">
    <property type="term" value="C:basement membrane"/>
    <property type="evidence" value="ECO:0000314"/>
    <property type="project" value="MGI"/>
</dbReference>
<dbReference type="GO" id="GO:0005737">
    <property type="term" value="C:cytoplasm"/>
    <property type="evidence" value="ECO:0000266"/>
    <property type="project" value="RGD"/>
</dbReference>
<dbReference type="GO" id="GO:0005783">
    <property type="term" value="C:endoplasmic reticulum"/>
    <property type="evidence" value="ECO:0000266"/>
    <property type="project" value="RGD"/>
</dbReference>
<dbReference type="GO" id="GO:0005576">
    <property type="term" value="C:extracellular region"/>
    <property type="evidence" value="ECO:0007669"/>
    <property type="project" value="UniProtKB-KW"/>
</dbReference>
<dbReference type="GO" id="GO:0005506">
    <property type="term" value="F:iron ion binding"/>
    <property type="evidence" value="ECO:0007669"/>
    <property type="project" value="InterPro"/>
</dbReference>
<dbReference type="GO" id="GO:0031418">
    <property type="term" value="F:L-ascorbic acid binding"/>
    <property type="evidence" value="ECO:0007669"/>
    <property type="project" value="UniProtKB-KW"/>
</dbReference>
<dbReference type="GO" id="GO:0019797">
    <property type="term" value="F:procollagen-proline 3-dioxygenase activity"/>
    <property type="evidence" value="ECO:0000318"/>
    <property type="project" value="GO_Central"/>
</dbReference>
<dbReference type="GO" id="GO:0060348">
    <property type="term" value="P:bone development"/>
    <property type="evidence" value="ECO:0000266"/>
    <property type="project" value="RGD"/>
</dbReference>
<dbReference type="GO" id="GO:0030199">
    <property type="term" value="P:collagen fibril organization"/>
    <property type="evidence" value="ECO:0000266"/>
    <property type="project" value="RGD"/>
</dbReference>
<dbReference type="GO" id="GO:0032963">
    <property type="term" value="P:collagen metabolic process"/>
    <property type="evidence" value="ECO:0000318"/>
    <property type="project" value="GO_Central"/>
</dbReference>
<dbReference type="GO" id="GO:0030308">
    <property type="term" value="P:negative regulation of cell growth"/>
    <property type="evidence" value="ECO:0000266"/>
    <property type="project" value="RGD"/>
</dbReference>
<dbReference type="GO" id="GO:1901874">
    <property type="term" value="P:negative regulation of post-translational protein modification"/>
    <property type="evidence" value="ECO:0000266"/>
    <property type="project" value="RGD"/>
</dbReference>
<dbReference type="GO" id="GO:0010976">
    <property type="term" value="P:positive regulation of neuron projection development"/>
    <property type="evidence" value="ECO:0000314"/>
    <property type="project" value="ParkinsonsUK-UCL"/>
</dbReference>
<dbReference type="GO" id="GO:0006457">
    <property type="term" value="P:protein folding"/>
    <property type="evidence" value="ECO:0000266"/>
    <property type="project" value="RGD"/>
</dbReference>
<dbReference type="GO" id="GO:0050821">
    <property type="term" value="P:protein stabilization"/>
    <property type="evidence" value="ECO:0000266"/>
    <property type="project" value="RGD"/>
</dbReference>
<dbReference type="GO" id="GO:0030278">
    <property type="term" value="P:regulation of ossification"/>
    <property type="evidence" value="ECO:0000266"/>
    <property type="project" value="RGD"/>
</dbReference>
<dbReference type="GO" id="GO:0050708">
    <property type="term" value="P:regulation of protein secretion"/>
    <property type="evidence" value="ECO:0000266"/>
    <property type="project" value="RGD"/>
</dbReference>
<dbReference type="FunFam" id="2.60.120.620:FF:000003">
    <property type="entry name" value="Prolyl 3-hydroxylase 2"/>
    <property type="match status" value="1"/>
</dbReference>
<dbReference type="Gene3D" id="2.60.120.620">
    <property type="entry name" value="q2cbj1_9rhob like domain"/>
    <property type="match status" value="1"/>
</dbReference>
<dbReference type="Gene3D" id="1.25.40.10">
    <property type="entry name" value="Tetratricopeptide repeat domain"/>
    <property type="match status" value="2"/>
</dbReference>
<dbReference type="InterPro" id="IPR056585">
    <property type="entry name" value="Leprecan_dom"/>
</dbReference>
<dbReference type="InterPro" id="IPR005123">
    <property type="entry name" value="Oxoglu/Fe-dep_dioxygenase_dom"/>
</dbReference>
<dbReference type="InterPro" id="IPR039575">
    <property type="entry name" value="P3H"/>
</dbReference>
<dbReference type="InterPro" id="IPR006620">
    <property type="entry name" value="Pro_4_hyd_alph"/>
</dbReference>
<dbReference type="InterPro" id="IPR044862">
    <property type="entry name" value="Pro_4_hyd_alph_FE2OG_OXY"/>
</dbReference>
<dbReference type="InterPro" id="IPR011990">
    <property type="entry name" value="TPR-like_helical_dom_sf"/>
</dbReference>
<dbReference type="PANTHER" id="PTHR14049">
    <property type="entry name" value="LEPRECAN 1"/>
    <property type="match status" value="1"/>
</dbReference>
<dbReference type="PANTHER" id="PTHR14049:SF5">
    <property type="entry name" value="PROLYL 3-HYDROXYLASE 1"/>
    <property type="match status" value="1"/>
</dbReference>
<dbReference type="Pfam" id="PF13640">
    <property type="entry name" value="2OG-FeII_Oxy_3"/>
    <property type="match status" value="1"/>
</dbReference>
<dbReference type="Pfam" id="PF23557">
    <property type="entry name" value="TPR_leprecan"/>
    <property type="match status" value="1"/>
</dbReference>
<dbReference type="SMART" id="SM00702">
    <property type="entry name" value="P4Hc"/>
    <property type="match status" value="1"/>
</dbReference>
<dbReference type="PROSITE" id="PS00014">
    <property type="entry name" value="ER_TARGET"/>
    <property type="match status" value="1"/>
</dbReference>
<dbReference type="PROSITE" id="PS51471">
    <property type="entry name" value="FE2OG_OXY"/>
    <property type="match status" value="1"/>
</dbReference>
<gene>
    <name evidence="9" type="primary">P3h1</name>
    <name evidence="7" type="synonym">Lepre1</name>
</gene>
<keyword id="KW-0175">Coiled coil</keyword>
<keyword id="KW-0223">Dioxygenase</keyword>
<keyword id="KW-0256">Endoplasmic reticulum</keyword>
<keyword id="KW-0272">Extracellular matrix</keyword>
<keyword id="KW-0325">Glycoprotein</keyword>
<keyword id="KW-0408">Iron</keyword>
<keyword id="KW-0479">Metal-binding</keyword>
<keyword id="KW-0560">Oxidoreductase</keyword>
<keyword id="KW-0654">Proteoglycan</keyword>
<keyword id="KW-1185">Reference proteome</keyword>
<keyword id="KW-0677">Repeat</keyword>
<keyword id="KW-0964">Secreted</keyword>
<keyword id="KW-0732">Signal</keyword>
<keyword id="KW-0802">TPR repeat</keyword>
<keyword id="KW-0847">Vitamin C</keyword>
<proteinExistence type="evidence at protein level"/>
<feature type="signal peptide" evidence="2">
    <location>
        <begin position="1"/>
        <end position="14"/>
    </location>
</feature>
<feature type="chain" id="PRO_0000240354" description="Prolyl 3-hydroxylase 1">
    <location>
        <begin position="15"/>
        <end position="728"/>
    </location>
</feature>
<feature type="repeat" description="TPR 1">
    <location>
        <begin position="25"/>
        <end position="58"/>
    </location>
</feature>
<feature type="repeat" description="TPR 2">
    <location>
        <begin position="135"/>
        <end position="168"/>
    </location>
</feature>
<feature type="repeat" description="TPR 3">
    <location>
        <begin position="197"/>
        <end position="230"/>
    </location>
</feature>
<feature type="repeat" description="TPR 4">
    <location>
        <begin position="293"/>
        <end position="326"/>
    </location>
</feature>
<feature type="domain" description="Fe2OG dioxygenase" evidence="3">
    <location>
        <begin position="556"/>
        <end position="670"/>
    </location>
</feature>
<feature type="region of interest" description="Disordered" evidence="5">
    <location>
        <begin position="691"/>
        <end position="728"/>
    </location>
</feature>
<feature type="coiled-coil region" evidence="2">
    <location>
        <begin position="393"/>
        <end position="431"/>
    </location>
</feature>
<feature type="short sequence motif" description="Prevents secretion from ER" evidence="4">
    <location>
        <begin position="725"/>
        <end position="728"/>
    </location>
</feature>
<feature type="compositionally biased region" description="Low complexity" evidence="5">
    <location>
        <begin position="698"/>
        <end position="707"/>
    </location>
</feature>
<feature type="compositionally biased region" description="Basic and acidic residues" evidence="5">
    <location>
        <begin position="712"/>
        <end position="728"/>
    </location>
</feature>
<feature type="active site" evidence="1">
    <location>
        <position position="661"/>
    </location>
</feature>
<feature type="binding site">
    <location>
        <position position="579"/>
    </location>
    <ligand>
        <name>Fe cation</name>
        <dbReference type="ChEBI" id="CHEBI:24875"/>
    </ligand>
</feature>
<feature type="binding site">
    <location>
        <position position="581"/>
    </location>
    <ligand>
        <name>Fe cation</name>
        <dbReference type="ChEBI" id="CHEBI:24875"/>
    </ligand>
</feature>
<feature type="binding site">
    <location>
        <position position="651"/>
    </location>
    <ligand>
        <name>Fe cation</name>
        <dbReference type="ChEBI" id="CHEBI:24875"/>
    </ligand>
</feature>
<feature type="glycosylation site" description="N-linked (GlcNAc...) asparagine" evidence="2">
    <location>
        <position position="308"/>
    </location>
</feature>
<feature type="glycosylation site" description="N-linked (GlcNAc...) asparagine" evidence="2">
    <location>
        <position position="450"/>
    </location>
</feature>
<feature type="glycosylation site" description="N-linked (GlcNAc...) asparagine" evidence="2">
    <location>
        <position position="459"/>
    </location>
</feature>
<feature type="glycosylation site" description="N-linked (GlcNAc...) asparagine" evidence="2">
    <location>
        <position position="532"/>
    </location>
</feature>
<evidence type="ECO:0000250" key="1"/>
<evidence type="ECO:0000255" key="2"/>
<evidence type="ECO:0000255" key="3">
    <source>
        <dbReference type="PROSITE-ProRule" id="PRU00805"/>
    </source>
</evidence>
<evidence type="ECO:0000255" key="4">
    <source>
        <dbReference type="PROSITE-ProRule" id="PRU10138"/>
    </source>
</evidence>
<evidence type="ECO:0000256" key="5">
    <source>
        <dbReference type="SAM" id="MobiDB-lite"/>
    </source>
</evidence>
<evidence type="ECO:0000269" key="6">
    <source>
    </source>
</evidence>
<evidence type="ECO:0000303" key="7">
    <source>
    </source>
</evidence>
<evidence type="ECO:0000305" key="8"/>
<evidence type="ECO:0000312" key="9">
    <source>
        <dbReference type="RGD" id="628823"/>
    </source>
</evidence>
<name>P3H1_RAT</name>
<organism>
    <name type="scientific">Rattus norvegicus</name>
    <name type="common">Rat</name>
    <dbReference type="NCBI Taxonomy" id="10116"/>
    <lineage>
        <taxon>Eukaryota</taxon>
        <taxon>Metazoa</taxon>
        <taxon>Chordata</taxon>
        <taxon>Craniata</taxon>
        <taxon>Vertebrata</taxon>
        <taxon>Euteleostomi</taxon>
        <taxon>Mammalia</taxon>
        <taxon>Eutheria</taxon>
        <taxon>Euarchontoglires</taxon>
        <taxon>Glires</taxon>
        <taxon>Rodentia</taxon>
        <taxon>Myomorpha</taxon>
        <taxon>Muroidea</taxon>
        <taxon>Muridae</taxon>
        <taxon>Murinae</taxon>
        <taxon>Rattus</taxon>
    </lineage>
</organism>